<comment type="function">
    <text evidence="1">Catalyzes both the ATP-dependent activation of exogenously supplied lipoate to lipoyl-AMP and the transfer of the activated lipoyl onto the lipoyl domains of lipoate-dependent enzymes.</text>
</comment>
<comment type="catalytic activity">
    <reaction evidence="1">
        <text>L-lysyl-[lipoyl-carrier protein] + (R)-lipoate + ATP = N(6)-[(R)-lipoyl]-L-lysyl-[lipoyl-carrier protein] + AMP + diphosphate + H(+)</text>
        <dbReference type="Rhea" id="RHEA:49288"/>
        <dbReference type="Rhea" id="RHEA-COMP:10500"/>
        <dbReference type="Rhea" id="RHEA-COMP:10502"/>
        <dbReference type="ChEBI" id="CHEBI:15378"/>
        <dbReference type="ChEBI" id="CHEBI:29969"/>
        <dbReference type="ChEBI" id="CHEBI:30616"/>
        <dbReference type="ChEBI" id="CHEBI:33019"/>
        <dbReference type="ChEBI" id="CHEBI:83088"/>
        <dbReference type="ChEBI" id="CHEBI:83099"/>
        <dbReference type="ChEBI" id="CHEBI:456215"/>
        <dbReference type="EC" id="6.3.1.20"/>
    </reaction>
</comment>
<comment type="pathway">
    <text evidence="1">Protein modification; protein lipoylation via exogenous pathway; protein N(6)-(lipoyl)lysine from lipoate: step 1/2.</text>
</comment>
<comment type="pathway">
    <text evidence="1">Protein modification; protein lipoylation via exogenous pathway; protein N(6)-(lipoyl)lysine from lipoate: step 2/2.</text>
</comment>
<comment type="subunit">
    <text evidence="1">Monomer.</text>
</comment>
<comment type="subcellular location">
    <subcellularLocation>
        <location evidence="1">Cytoplasm</location>
    </subcellularLocation>
</comment>
<comment type="miscellaneous">
    <text evidence="1">In the transfer reaction, the free carboxyl group of lipoic acid is attached via an amide linkage to the epsilon-amino group of a specific lysine residue of lipoyl domains of lipoate-dependent enzymes.</text>
</comment>
<comment type="similarity">
    <text evidence="1">Belongs to the LplA family.</text>
</comment>
<dbReference type="EC" id="6.3.1.20" evidence="1"/>
<dbReference type="EMBL" id="CP001396">
    <property type="protein sequence ID" value="ACR63657.1"/>
    <property type="molecule type" value="Genomic_DNA"/>
</dbReference>
<dbReference type="RefSeq" id="WP_000105884.1">
    <property type="nucleotide sequence ID" value="NC_012759.1"/>
</dbReference>
<dbReference type="SMR" id="C4ZT68"/>
<dbReference type="KEGG" id="ebw:BWG_4078"/>
<dbReference type="HOGENOM" id="CLU_022986_0_1_6"/>
<dbReference type="UniPathway" id="UPA00537">
    <property type="reaction ID" value="UER00594"/>
</dbReference>
<dbReference type="UniPathway" id="UPA00537">
    <property type="reaction ID" value="UER00595"/>
</dbReference>
<dbReference type="GO" id="GO:0005829">
    <property type="term" value="C:cytosol"/>
    <property type="evidence" value="ECO:0007669"/>
    <property type="project" value="TreeGrafter"/>
</dbReference>
<dbReference type="GO" id="GO:0005524">
    <property type="term" value="F:ATP binding"/>
    <property type="evidence" value="ECO:0007669"/>
    <property type="project" value="UniProtKB-KW"/>
</dbReference>
<dbReference type="GO" id="GO:0016979">
    <property type="term" value="F:lipoate-protein ligase activity"/>
    <property type="evidence" value="ECO:0007669"/>
    <property type="project" value="UniProtKB-UniRule"/>
</dbReference>
<dbReference type="GO" id="GO:0017118">
    <property type="term" value="F:lipoyltransferase activity"/>
    <property type="evidence" value="ECO:0007669"/>
    <property type="project" value="TreeGrafter"/>
</dbReference>
<dbReference type="GO" id="GO:0036211">
    <property type="term" value="P:protein modification process"/>
    <property type="evidence" value="ECO:0007669"/>
    <property type="project" value="InterPro"/>
</dbReference>
<dbReference type="CDD" id="cd16435">
    <property type="entry name" value="BPL_LplA_LipB"/>
    <property type="match status" value="1"/>
</dbReference>
<dbReference type="FunFam" id="3.30.390.50:FF:000002">
    <property type="entry name" value="Lipoate-protein ligase A"/>
    <property type="match status" value="1"/>
</dbReference>
<dbReference type="FunFam" id="3.30.930.10:FF:000024">
    <property type="entry name" value="Lipoate-protein ligase A"/>
    <property type="match status" value="1"/>
</dbReference>
<dbReference type="Gene3D" id="3.30.930.10">
    <property type="entry name" value="Bira Bifunctional Protein, Domain 2"/>
    <property type="match status" value="1"/>
</dbReference>
<dbReference type="Gene3D" id="3.30.390.50">
    <property type="entry name" value="CO dehydrogenase flavoprotein, C-terminal domain"/>
    <property type="match status" value="1"/>
</dbReference>
<dbReference type="HAMAP" id="MF_01602">
    <property type="entry name" value="LplA"/>
    <property type="match status" value="1"/>
</dbReference>
<dbReference type="InterPro" id="IPR045864">
    <property type="entry name" value="aa-tRNA-synth_II/BPL/LPL"/>
</dbReference>
<dbReference type="InterPro" id="IPR004143">
    <property type="entry name" value="BPL_LPL_catalytic"/>
</dbReference>
<dbReference type="InterPro" id="IPR023741">
    <property type="entry name" value="Lipoate_ligase_A"/>
</dbReference>
<dbReference type="InterPro" id="IPR019491">
    <property type="entry name" value="Lipoate_protein_ligase_C"/>
</dbReference>
<dbReference type="InterPro" id="IPR004562">
    <property type="entry name" value="LipoylTrfase_LipoateP_Ligase"/>
</dbReference>
<dbReference type="NCBIfam" id="TIGR00545">
    <property type="entry name" value="lipoyltrans"/>
    <property type="match status" value="1"/>
</dbReference>
<dbReference type="PANTHER" id="PTHR12561">
    <property type="entry name" value="LIPOATE-PROTEIN LIGASE"/>
    <property type="match status" value="1"/>
</dbReference>
<dbReference type="PANTHER" id="PTHR12561:SF3">
    <property type="entry name" value="LIPOYLTRANSFERASE 1, MITOCHONDRIAL"/>
    <property type="match status" value="1"/>
</dbReference>
<dbReference type="Pfam" id="PF10437">
    <property type="entry name" value="Lip_prot_lig_C"/>
    <property type="match status" value="1"/>
</dbReference>
<dbReference type="Pfam" id="PF21948">
    <property type="entry name" value="LplA-B_cat"/>
    <property type="match status" value="1"/>
</dbReference>
<dbReference type="SUPFAM" id="SSF55681">
    <property type="entry name" value="Class II aaRS and biotin synthetases"/>
    <property type="match status" value="1"/>
</dbReference>
<dbReference type="SUPFAM" id="SSF82649">
    <property type="entry name" value="SufE/NifU"/>
    <property type="match status" value="1"/>
</dbReference>
<dbReference type="PROSITE" id="PS51733">
    <property type="entry name" value="BPL_LPL_CATALYTIC"/>
    <property type="match status" value="1"/>
</dbReference>
<name>LPLA_ECOBW</name>
<gene>
    <name evidence="1" type="primary">lplA</name>
    <name type="ordered locus">BWG_4078</name>
</gene>
<keyword id="KW-0067">ATP-binding</keyword>
<keyword id="KW-0963">Cytoplasm</keyword>
<keyword id="KW-0436">Ligase</keyword>
<keyword id="KW-0547">Nucleotide-binding</keyword>
<feature type="chain" id="PRO_1000215689" description="Lipoate-protein ligase A">
    <location>
        <begin position="1"/>
        <end position="338"/>
    </location>
</feature>
<feature type="domain" description="BPL/LPL catalytic" evidence="2">
    <location>
        <begin position="29"/>
        <end position="216"/>
    </location>
</feature>
<feature type="binding site" evidence="1">
    <location>
        <position position="71"/>
    </location>
    <ligand>
        <name>ATP</name>
        <dbReference type="ChEBI" id="CHEBI:30616"/>
    </ligand>
</feature>
<feature type="binding site" evidence="1">
    <location>
        <begin position="76"/>
        <end position="79"/>
    </location>
    <ligand>
        <name>ATP</name>
        <dbReference type="ChEBI" id="CHEBI:30616"/>
    </ligand>
</feature>
<feature type="binding site" evidence="1">
    <location>
        <position position="134"/>
    </location>
    <ligand>
        <name>(R)-lipoate</name>
        <dbReference type="ChEBI" id="CHEBI:83088"/>
    </ligand>
</feature>
<feature type="binding site" evidence="1">
    <location>
        <position position="134"/>
    </location>
    <ligand>
        <name>ATP</name>
        <dbReference type="ChEBI" id="CHEBI:30616"/>
    </ligand>
</feature>
<reference key="1">
    <citation type="journal article" date="2009" name="J. Bacteriol.">
        <title>Genomic sequencing reveals regulatory mutations and recombinational events in the widely used MC4100 lineage of Escherichia coli K-12.</title>
        <authorList>
            <person name="Ferenci T."/>
            <person name="Zhou Z."/>
            <person name="Betteridge T."/>
            <person name="Ren Y."/>
            <person name="Liu Y."/>
            <person name="Feng L."/>
            <person name="Reeves P.R."/>
            <person name="Wang L."/>
        </authorList>
    </citation>
    <scope>NUCLEOTIDE SEQUENCE [LARGE SCALE GENOMIC DNA]</scope>
    <source>
        <strain>K12 / MC4100 / BW2952</strain>
    </source>
</reference>
<proteinExistence type="inferred from homology"/>
<sequence>MSTLRLLISDSYDPWFNLAVEECIFRQMPATQRVLFLWRNADTVVIGRAQNPWKECNTRRMEEDNVRLARRSSGGGAVFHDLGNTCFTFMAGKPEYDKTISTSIVLNALNALGVSAEASGRNDLVVKTVEGDRKVSGSAYRETKDRGFHHGTLLLNADLSRLANYLNPDKKKLAAKGITSVRSRVTNLTELLPGITHEQVCEAITEAFFAHYGERVEAEIISPNKTPDLPNFAETFARQSSWEWNFGQAPAFSHLLDERFTWGGVELHFDVEKGHITRAQVFTDSLNPAPLEALAGRLQGCLYRADMLQQECEALLVDFPEQEKELRELSAWMAGAVR</sequence>
<evidence type="ECO:0000255" key="1">
    <source>
        <dbReference type="HAMAP-Rule" id="MF_01602"/>
    </source>
</evidence>
<evidence type="ECO:0000255" key="2">
    <source>
        <dbReference type="PROSITE-ProRule" id="PRU01067"/>
    </source>
</evidence>
<organism>
    <name type="scientific">Escherichia coli (strain K12 / MC4100 / BW2952)</name>
    <dbReference type="NCBI Taxonomy" id="595496"/>
    <lineage>
        <taxon>Bacteria</taxon>
        <taxon>Pseudomonadati</taxon>
        <taxon>Pseudomonadota</taxon>
        <taxon>Gammaproteobacteria</taxon>
        <taxon>Enterobacterales</taxon>
        <taxon>Enterobacteriaceae</taxon>
        <taxon>Escherichia</taxon>
    </lineage>
</organism>
<accession>C4ZT68</accession>
<protein>
    <recommendedName>
        <fullName evidence="1">Lipoate-protein ligase A</fullName>
        <ecNumber evidence="1">6.3.1.20</ecNumber>
    </recommendedName>
    <alternativeName>
        <fullName evidence="1">Lipoate--protein ligase</fullName>
    </alternativeName>
</protein>